<name>PA2I_LATSE</name>
<protein>
    <recommendedName>
        <fullName>Phospholipase A2 GL16-1</fullName>
        <ecNumber>3.1.1.4</ecNumber>
    </recommendedName>
    <alternativeName>
        <fullName>Phosphatidylcholine 2-acylhydrolase</fullName>
    </alternativeName>
    <alternativeName>
        <fullName>pkP5</fullName>
    </alternativeName>
</protein>
<accession>Q8JFB2</accession>
<reference key="1">
    <citation type="journal article" date="2002" name="Gene">
        <title>Nucleotide sequence of phospholipase A2 gene expressed in snake pancreas reveals the molecular evolution of toxic phospholipase A2 genes.</title>
        <authorList>
            <person name="Fujimi T.J."/>
            <person name="Kariya Y."/>
            <person name="Tsuchiya T."/>
            <person name="Tamiya T."/>
        </authorList>
    </citation>
    <scope>NUCLEOTIDE SEQUENCE [GENOMIC DNA / MRNA]</scope>
    <source>
        <tissue>Pancreas</tissue>
    </source>
</reference>
<feature type="signal peptide" evidence="2">
    <location>
        <begin position="1"/>
        <end position="21"/>
    </location>
</feature>
<feature type="propeptide" id="PRO_0000022914" evidence="1">
    <location>
        <begin position="22"/>
        <end position="27"/>
    </location>
</feature>
<feature type="chain" id="PRO_0000022915" description="Phospholipase A2 GL16-1">
    <location>
        <begin position="28"/>
        <end position="152"/>
    </location>
</feature>
<feature type="active site" evidence="1">
    <location>
        <position position="75"/>
    </location>
</feature>
<feature type="active site" evidence="1">
    <location>
        <position position="126"/>
    </location>
</feature>
<feature type="binding site" evidence="1">
    <location>
        <position position="55"/>
    </location>
    <ligand>
        <name>Ca(2+)</name>
        <dbReference type="ChEBI" id="CHEBI:29108"/>
    </ligand>
</feature>
<feature type="binding site" evidence="1">
    <location>
        <position position="57"/>
    </location>
    <ligand>
        <name>Ca(2+)</name>
        <dbReference type="ChEBI" id="CHEBI:29108"/>
    </ligand>
</feature>
<feature type="binding site" evidence="1">
    <location>
        <position position="59"/>
    </location>
    <ligand>
        <name>Ca(2+)</name>
        <dbReference type="ChEBI" id="CHEBI:29108"/>
    </ligand>
</feature>
<feature type="binding site" evidence="1">
    <location>
        <position position="76"/>
    </location>
    <ligand>
        <name>Ca(2+)</name>
        <dbReference type="ChEBI" id="CHEBI:29108"/>
    </ligand>
</feature>
<feature type="disulfide bond" evidence="1">
    <location>
        <begin position="38"/>
        <end position="104"/>
    </location>
</feature>
<feature type="disulfide bond" evidence="1">
    <location>
        <begin position="54"/>
        <end position="151"/>
    </location>
</feature>
<feature type="disulfide bond" evidence="1">
    <location>
        <begin position="56"/>
        <end position="72"/>
    </location>
</feature>
<feature type="disulfide bond" evidence="1">
    <location>
        <begin position="71"/>
        <end position="132"/>
    </location>
</feature>
<feature type="disulfide bond" evidence="1">
    <location>
        <begin position="78"/>
        <end position="125"/>
    </location>
</feature>
<feature type="disulfide bond" evidence="1">
    <location>
        <begin position="88"/>
        <end position="118"/>
    </location>
</feature>
<feature type="disulfide bond" evidence="1">
    <location>
        <begin position="111"/>
        <end position="123"/>
    </location>
</feature>
<evidence type="ECO:0000250" key="1"/>
<evidence type="ECO:0000255" key="2"/>
<evidence type="ECO:0000255" key="3">
    <source>
        <dbReference type="PROSITE-ProRule" id="PRU10035"/>
    </source>
</evidence>
<evidence type="ECO:0000255" key="4">
    <source>
        <dbReference type="PROSITE-ProRule" id="PRU10036"/>
    </source>
</evidence>
<evidence type="ECO:0000305" key="5"/>
<keyword id="KW-0106">Calcium</keyword>
<keyword id="KW-1015">Disulfide bond</keyword>
<keyword id="KW-0378">Hydrolase</keyword>
<keyword id="KW-0442">Lipid degradation</keyword>
<keyword id="KW-0443">Lipid metabolism</keyword>
<keyword id="KW-0479">Metal-binding</keyword>
<keyword id="KW-0964">Secreted</keyword>
<keyword id="KW-0732">Signal</keyword>
<dbReference type="EC" id="3.1.1.4"/>
<dbReference type="EMBL" id="AB078348">
    <property type="protein sequence ID" value="BAC03247.1"/>
    <property type="molecule type" value="mRNA"/>
</dbReference>
<dbReference type="EMBL" id="AB078346">
    <property type="protein sequence ID" value="BAC03245.1"/>
    <property type="molecule type" value="Genomic_DNA"/>
</dbReference>
<dbReference type="SMR" id="Q8JFB2"/>
<dbReference type="GO" id="GO:0005576">
    <property type="term" value="C:extracellular region"/>
    <property type="evidence" value="ECO:0007669"/>
    <property type="project" value="UniProtKB-SubCell"/>
</dbReference>
<dbReference type="GO" id="GO:0005509">
    <property type="term" value="F:calcium ion binding"/>
    <property type="evidence" value="ECO:0007669"/>
    <property type="project" value="InterPro"/>
</dbReference>
<dbReference type="GO" id="GO:0047498">
    <property type="term" value="F:calcium-dependent phospholipase A2 activity"/>
    <property type="evidence" value="ECO:0007669"/>
    <property type="project" value="TreeGrafter"/>
</dbReference>
<dbReference type="GO" id="GO:0005543">
    <property type="term" value="F:phospholipid binding"/>
    <property type="evidence" value="ECO:0007669"/>
    <property type="project" value="TreeGrafter"/>
</dbReference>
<dbReference type="GO" id="GO:0005102">
    <property type="term" value="F:signaling receptor binding"/>
    <property type="evidence" value="ECO:0007669"/>
    <property type="project" value="TreeGrafter"/>
</dbReference>
<dbReference type="GO" id="GO:0050482">
    <property type="term" value="P:arachidonate secretion"/>
    <property type="evidence" value="ECO:0007669"/>
    <property type="project" value="InterPro"/>
</dbReference>
<dbReference type="GO" id="GO:0006633">
    <property type="term" value="P:fatty acid biosynthetic process"/>
    <property type="evidence" value="ECO:0007669"/>
    <property type="project" value="TreeGrafter"/>
</dbReference>
<dbReference type="GO" id="GO:0016042">
    <property type="term" value="P:lipid catabolic process"/>
    <property type="evidence" value="ECO:0007669"/>
    <property type="project" value="UniProtKB-KW"/>
</dbReference>
<dbReference type="GO" id="GO:0006644">
    <property type="term" value="P:phospholipid metabolic process"/>
    <property type="evidence" value="ECO:0007669"/>
    <property type="project" value="InterPro"/>
</dbReference>
<dbReference type="GO" id="GO:0048146">
    <property type="term" value="P:positive regulation of fibroblast proliferation"/>
    <property type="evidence" value="ECO:0007669"/>
    <property type="project" value="TreeGrafter"/>
</dbReference>
<dbReference type="CDD" id="cd00125">
    <property type="entry name" value="PLA2c"/>
    <property type="match status" value="1"/>
</dbReference>
<dbReference type="FunFam" id="1.20.90.10:FF:000011">
    <property type="entry name" value="Phospholipase A(2)"/>
    <property type="match status" value="1"/>
</dbReference>
<dbReference type="Gene3D" id="1.20.90.10">
    <property type="entry name" value="Phospholipase A2 domain"/>
    <property type="match status" value="1"/>
</dbReference>
<dbReference type="InterPro" id="IPR001211">
    <property type="entry name" value="PLipase_A2"/>
</dbReference>
<dbReference type="InterPro" id="IPR033112">
    <property type="entry name" value="PLipase_A2_Asp_AS"/>
</dbReference>
<dbReference type="InterPro" id="IPR016090">
    <property type="entry name" value="PLipase_A2_dom"/>
</dbReference>
<dbReference type="InterPro" id="IPR036444">
    <property type="entry name" value="PLipase_A2_dom_sf"/>
</dbReference>
<dbReference type="InterPro" id="IPR033113">
    <property type="entry name" value="PLipase_A2_His_AS"/>
</dbReference>
<dbReference type="PANTHER" id="PTHR11716:SF94">
    <property type="entry name" value="PHOSPHOLIPASE A2"/>
    <property type="match status" value="1"/>
</dbReference>
<dbReference type="PANTHER" id="PTHR11716">
    <property type="entry name" value="PHOSPHOLIPASE A2 FAMILY MEMBER"/>
    <property type="match status" value="1"/>
</dbReference>
<dbReference type="Pfam" id="PF00068">
    <property type="entry name" value="Phospholip_A2_1"/>
    <property type="match status" value="1"/>
</dbReference>
<dbReference type="PRINTS" id="PR00389">
    <property type="entry name" value="PHPHLIPASEA2"/>
</dbReference>
<dbReference type="SMART" id="SM00085">
    <property type="entry name" value="PA2c"/>
    <property type="match status" value="1"/>
</dbReference>
<dbReference type="SUPFAM" id="SSF48619">
    <property type="entry name" value="Phospholipase A2, PLA2"/>
    <property type="match status" value="1"/>
</dbReference>
<dbReference type="PROSITE" id="PS00119">
    <property type="entry name" value="PA2_ASP"/>
    <property type="match status" value="1"/>
</dbReference>
<dbReference type="PROSITE" id="PS00118">
    <property type="entry name" value="PA2_HIS"/>
    <property type="match status" value="1"/>
</dbReference>
<comment type="function">
    <text evidence="1">PA2 catalyzes the calcium-dependent hydrolysis of the 2-acyl groups in 3-sn-phosphoglycerides.</text>
</comment>
<comment type="catalytic activity">
    <reaction evidence="3 4">
        <text>a 1,2-diacyl-sn-glycero-3-phosphocholine + H2O = a 1-acyl-sn-glycero-3-phosphocholine + a fatty acid + H(+)</text>
        <dbReference type="Rhea" id="RHEA:15801"/>
        <dbReference type="ChEBI" id="CHEBI:15377"/>
        <dbReference type="ChEBI" id="CHEBI:15378"/>
        <dbReference type="ChEBI" id="CHEBI:28868"/>
        <dbReference type="ChEBI" id="CHEBI:57643"/>
        <dbReference type="ChEBI" id="CHEBI:58168"/>
        <dbReference type="EC" id="3.1.1.4"/>
    </reaction>
</comment>
<comment type="cofactor">
    <cofactor evidence="1">
        <name>Ca(2+)</name>
        <dbReference type="ChEBI" id="CHEBI:29108"/>
    </cofactor>
    <text evidence="1">Binds 1 Ca(2+) ion per subunit.</text>
</comment>
<comment type="subcellular location">
    <subcellularLocation>
        <location evidence="1">Secreted</location>
    </subcellularLocation>
</comment>
<comment type="similarity">
    <text evidence="5">Belongs to the phospholipase A2 family. Group I subfamily.</text>
</comment>
<organism>
    <name type="scientific">Laticauda semifasciata</name>
    <name type="common">Black-banded sea krait</name>
    <name type="synonym">Pseudolaticauda semifasciata</name>
    <dbReference type="NCBI Taxonomy" id="8631"/>
    <lineage>
        <taxon>Eukaryota</taxon>
        <taxon>Metazoa</taxon>
        <taxon>Chordata</taxon>
        <taxon>Craniata</taxon>
        <taxon>Vertebrata</taxon>
        <taxon>Euteleostomi</taxon>
        <taxon>Lepidosauria</taxon>
        <taxon>Squamata</taxon>
        <taxon>Bifurcata</taxon>
        <taxon>Unidentata</taxon>
        <taxon>Episquamata</taxon>
        <taxon>Toxicofera</taxon>
        <taxon>Serpentes</taxon>
        <taxon>Colubroidea</taxon>
        <taxon>Elapidae</taxon>
        <taxon>Laticaudinae</taxon>
        <taxon>Laticauda</taxon>
    </lineage>
</organism>
<sequence>MNPAHLLVLLAVCVSLLGASTIPPLPLNLVQFSNMIKCTIPGSRPLLDYADYGCYCGAGGSGTPVDELDRCCQTHDNCYSQAKKHPACKSPLDSPYIKIYSYTCSGGSLTCRDDNDECGAFICNCDRTAAICFAGAPYNKENYNIDTKKHCK</sequence>
<proteinExistence type="evidence at transcript level"/>